<sequence length="87" mass="9647">MAMRFLNIGYGNIVSAHRIIAIVSPESAPIKRTVQEAREHNALLDATYGRKTRAVIVMDDGHVVLSPIQPETIAHRLNNKEDLSEEG</sequence>
<feature type="chain" id="PRO_0000050216" description="Putative regulatory protein BA_4010/GBAA_4010/BAS3723">
    <location>
        <begin position="1"/>
        <end position="87"/>
    </location>
</feature>
<organism>
    <name type="scientific">Bacillus anthracis</name>
    <dbReference type="NCBI Taxonomy" id="1392"/>
    <lineage>
        <taxon>Bacteria</taxon>
        <taxon>Bacillati</taxon>
        <taxon>Bacillota</taxon>
        <taxon>Bacilli</taxon>
        <taxon>Bacillales</taxon>
        <taxon>Bacillaceae</taxon>
        <taxon>Bacillus</taxon>
        <taxon>Bacillus cereus group</taxon>
    </lineage>
</organism>
<evidence type="ECO:0000255" key="1">
    <source>
        <dbReference type="HAMAP-Rule" id="MF_01503"/>
    </source>
</evidence>
<keyword id="KW-1185">Reference proteome</keyword>
<protein>
    <recommendedName>
        <fullName evidence="1">Putative regulatory protein BA_4010/GBAA_4010/BAS3723</fullName>
    </recommendedName>
</protein>
<comment type="similarity">
    <text evidence="1">Belongs to the RemA family.</text>
</comment>
<dbReference type="EMBL" id="AE016879">
    <property type="protein sequence ID" value="AAP27738.1"/>
    <property type="molecule type" value="Genomic_DNA"/>
</dbReference>
<dbReference type="EMBL" id="AE017334">
    <property type="protein sequence ID" value="AAT33127.1"/>
    <property type="molecule type" value="Genomic_DNA"/>
</dbReference>
<dbReference type="EMBL" id="AE017225">
    <property type="protein sequence ID" value="AAT56025.1"/>
    <property type="molecule type" value="Genomic_DNA"/>
</dbReference>
<dbReference type="RefSeq" id="NP_846252.1">
    <property type="nucleotide sequence ID" value="NC_003997.3"/>
</dbReference>
<dbReference type="RefSeq" id="YP_029974.1">
    <property type="nucleotide sequence ID" value="NC_005945.1"/>
</dbReference>
<dbReference type="SMR" id="Q81WG6"/>
<dbReference type="STRING" id="261594.GBAA_4010"/>
<dbReference type="DNASU" id="1086719"/>
<dbReference type="KEGG" id="ban:BA_4010"/>
<dbReference type="KEGG" id="bar:GBAA_4010"/>
<dbReference type="KEGG" id="bat:BAS3723"/>
<dbReference type="PATRIC" id="fig|198094.11.peg.3980"/>
<dbReference type="eggNOG" id="COG2052">
    <property type="taxonomic scope" value="Bacteria"/>
</dbReference>
<dbReference type="HOGENOM" id="CLU_165326_0_0_9"/>
<dbReference type="OMA" id="APIKRVI"/>
<dbReference type="OrthoDB" id="5432174at2"/>
<dbReference type="Proteomes" id="UP000000427">
    <property type="component" value="Chromosome"/>
</dbReference>
<dbReference type="Proteomes" id="UP000000594">
    <property type="component" value="Chromosome"/>
</dbReference>
<dbReference type="HAMAP" id="MF_01503">
    <property type="entry name" value="RemA"/>
    <property type="match status" value="1"/>
</dbReference>
<dbReference type="InterPro" id="IPR007169">
    <property type="entry name" value="RemA-like"/>
</dbReference>
<dbReference type="NCBIfam" id="NF046064">
    <property type="entry name" value="MtxBflmRegRemA"/>
    <property type="match status" value="1"/>
</dbReference>
<dbReference type="NCBIfam" id="NF003315">
    <property type="entry name" value="PRK04323.1"/>
    <property type="match status" value="1"/>
</dbReference>
<dbReference type="PANTHER" id="PTHR38449:SF1">
    <property type="entry name" value="REGULATORY PROTEIN SSL2874-RELATED"/>
    <property type="match status" value="1"/>
</dbReference>
<dbReference type="PANTHER" id="PTHR38449">
    <property type="entry name" value="REGULATORY PROTEIN TM_1690-RELATED"/>
    <property type="match status" value="1"/>
</dbReference>
<dbReference type="Pfam" id="PF04025">
    <property type="entry name" value="RemA-like"/>
    <property type="match status" value="1"/>
</dbReference>
<name>Y4010_BACAN</name>
<proteinExistence type="inferred from homology"/>
<accession>Q81WG6</accession>
<accession>Q6HUL4</accession>
<accession>Q6KNU8</accession>
<gene>
    <name type="ordered locus">BA_4010</name>
    <name type="ordered locus">GBAA_4010</name>
    <name type="ordered locus">BAS3723</name>
</gene>
<reference key="1">
    <citation type="journal article" date="2003" name="Nature">
        <title>The genome sequence of Bacillus anthracis Ames and comparison to closely related bacteria.</title>
        <authorList>
            <person name="Read T.D."/>
            <person name="Peterson S.N."/>
            <person name="Tourasse N.J."/>
            <person name="Baillie L.W."/>
            <person name="Paulsen I.T."/>
            <person name="Nelson K.E."/>
            <person name="Tettelin H."/>
            <person name="Fouts D.E."/>
            <person name="Eisen J.A."/>
            <person name="Gill S.R."/>
            <person name="Holtzapple E.K."/>
            <person name="Okstad O.A."/>
            <person name="Helgason E."/>
            <person name="Rilstone J."/>
            <person name="Wu M."/>
            <person name="Kolonay J.F."/>
            <person name="Beanan M.J."/>
            <person name="Dodson R.J."/>
            <person name="Brinkac L.M."/>
            <person name="Gwinn M.L."/>
            <person name="DeBoy R.T."/>
            <person name="Madpu R."/>
            <person name="Daugherty S.C."/>
            <person name="Durkin A.S."/>
            <person name="Haft D.H."/>
            <person name="Nelson W.C."/>
            <person name="Peterson J.D."/>
            <person name="Pop M."/>
            <person name="Khouri H.M."/>
            <person name="Radune D."/>
            <person name="Benton J.L."/>
            <person name="Mahamoud Y."/>
            <person name="Jiang L."/>
            <person name="Hance I.R."/>
            <person name="Weidman J.F."/>
            <person name="Berry K.J."/>
            <person name="Plaut R.D."/>
            <person name="Wolf A.M."/>
            <person name="Watkins K.L."/>
            <person name="Nierman W.C."/>
            <person name="Hazen A."/>
            <person name="Cline R.T."/>
            <person name="Redmond C."/>
            <person name="Thwaite J.E."/>
            <person name="White O."/>
            <person name="Salzberg S.L."/>
            <person name="Thomason B."/>
            <person name="Friedlander A.M."/>
            <person name="Koehler T.M."/>
            <person name="Hanna P.C."/>
            <person name="Kolstoe A.-B."/>
            <person name="Fraser C.M."/>
        </authorList>
    </citation>
    <scope>NUCLEOTIDE SEQUENCE [LARGE SCALE GENOMIC DNA]</scope>
    <source>
        <strain>Ames / isolate Porton</strain>
    </source>
</reference>
<reference key="2">
    <citation type="journal article" date="2009" name="J. Bacteriol.">
        <title>The complete genome sequence of Bacillus anthracis Ames 'Ancestor'.</title>
        <authorList>
            <person name="Ravel J."/>
            <person name="Jiang L."/>
            <person name="Stanley S.T."/>
            <person name="Wilson M.R."/>
            <person name="Decker R.S."/>
            <person name="Read T.D."/>
            <person name="Worsham P."/>
            <person name="Keim P.S."/>
            <person name="Salzberg S.L."/>
            <person name="Fraser-Liggett C.M."/>
            <person name="Rasko D.A."/>
        </authorList>
    </citation>
    <scope>NUCLEOTIDE SEQUENCE [LARGE SCALE GENOMIC DNA]</scope>
    <source>
        <strain>Ames ancestor</strain>
    </source>
</reference>
<reference key="3">
    <citation type="submission" date="2004-01" db="EMBL/GenBank/DDBJ databases">
        <title>Complete genome sequence of Bacillus anthracis Sterne.</title>
        <authorList>
            <person name="Brettin T.S."/>
            <person name="Bruce D."/>
            <person name="Challacombe J.F."/>
            <person name="Gilna P."/>
            <person name="Han C."/>
            <person name="Hill K."/>
            <person name="Hitchcock P."/>
            <person name="Jackson P."/>
            <person name="Keim P."/>
            <person name="Longmire J."/>
            <person name="Lucas S."/>
            <person name="Okinaka R."/>
            <person name="Richardson P."/>
            <person name="Rubin E."/>
            <person name="Tice H."/>
        </authorList>
    </citation>
    <scope>NUCLEOTIDE SEQUENCE [LARGE SCALE GENOMIC DNA]</scope>
    <source>
        <strain>Sterne</strain>
    </source>
</reference>